<gene>
    <name evidence="5" type="primary">IMEF</name>
    <name type="ORF">QY95_01593</name>
</gene>
<organism>
    <name type="scientific">Bacillus thermotolerans</name>
    <name type="common">Quasibacillus thermotolerans</name>
    <dbReference type="NCBI Taxonomy" id="1221996"/>
    <lineage>
        <taxon>Bacteria</taxon>
        <taxon>Bacillati</taxon>
        <taxon>Bacillota</taxon>
        <taxon>Bacilli</taxon>
        <taxon>Bacillales</taxon>
        <taxon>Bacillaceae</taxon>
        <taxon>Bacillus</taxon>
    </lineage>
</organism>
<reference key="1">
    <citation type="journal article" date="2017" name="Syst. Appl. Microbiol.">
        <title>Examination into the taxonomic position of Bacillus thermotolerans Yang et al., 2013, proposal for its reclassification into a new genus and species Quasibacillus thermotolerans gen. nov., comb. nov. and reclassification of B. encimensis Dastager et al., 2015 as a later heterotypic synonym of B. badius.</title>
        <authorList>
            <person name="Verma A."/>
            <person name="Pal Y."/>
            <person name="Khatri I."/>
            <person name="Ojha A.K."/>
            <person name="Gruber-Vodicka H."/>
            <person name="Schumann P."/>
            <person name="Dastager S."/>
            <person name="Subramanian S."/>
            <person name="Mayilraj S."/>
            <person name="Krishnamurthi S."/>
        </authorList>
    </citation>
    <scope>NUCLEOTIDE SEQUENCE [LARGE SCALE GENOMIC DNA]</scope>
    <source>
        <strain>MTCC 10057 / 5.5LF 38TD</strain>
        <strain>MTCC 8252</strain>
    </source>
</reference>
<reference key="2">
    <citation type="journal article" date="2017" name="Nat. Microbiol.">
        <title>Widespread distribution of encapsulin nanocompartments reveals functional diversity.</title>
        <authorList>
            <person name="Giessen T.W."/>
            <person name="Silver P.A."/>
        </authorList>
    </citation>
    <scope>FUNCTION</scope>
    <scope>SUBUNIT</scope>
    <scope>SUBCELLULAR LOCATION</scope>
    <scope>DOMAIN</scope>
    <scope>MUTAGENESIS OF 183-LYS--GLN-192</scope>
    <source>
        <strain>MTCC 10057 / 5.5LF 38TD</strain>
    </source>
</reference>
<reference key="3">
    <citation type="journal article" date="2019" name="ACS Nano">
        <title>Iron-Sequestering Nanocompartments as Multiplexed Electron Microscopy Gene Reporters.</title>
        <authorList>
            <person name="Sigmund F."/>
            <person name="Pettinger S."/>
            <person name="Kube M."/>
            <person name="Schneider F."/>
            <person name="Schifferer M."/>
            <person name="Schneider S."/>
            <person name="Efremova M.V."/>
            <person name="Pujol-Marti J."/>
            <person name="Aichler M."/>
            <person name="Walch A."/>
            <person name="Misgeld T."/>
            <person name="Dietz H."/>
            <person name="Westmeyer G.G."/>
        </authorList>
    </citation>
    <scope>FUNCTION</scope>
    <scope>PROBABLE CATALYTIC ACTIVITY</scope>
    <scope>SUBUNIT</scope>
    <scope>SUBCELLULAR LOCATION</scope>
    <scope>BIOTECHNOLOGY</scope>
</reference>
<reference evidence="10" key="4">
    <citation type="journal article" date="2019" name="Elife">
        <title>Large protein organelles form a new iron sequestration system with high storage capacity.</title>
        <authorList>
            <person name="Giessen T.W."/>
            <person name="Orlando B.J."/>
            <person name="Verdegaal A.A."/>
            <person name="Chambers M.G."/>
            <person name="Gardener J."/>
            <person name="Bell D.C."/>
            <person name="Birrane G."/>
            <person name="Liao M."/>
            <person name="Silver P.A."/>
        </authorList>
    </citation>
    <scope>X-RAY CRYSTALLOGRAPHY (1.72 ANGSTROMS) IN COMPLEX WITH FE(3+)</scope>
    <scope>FUNCTION</scope>
    <scope>POSSIBLE CATALYTIC ACTIVITY</scope>
    <scope>BIOPHYSICOCHEMICAL PROPERTIES</scope>
    <scope>SUBUNIT</scope>
    <scope>SUBCELLULAR LOCATION</scope>
    <scope>DOMAIN</scope>
    <scope>MUTAGENESIS OF 180-HIS--GLN-192</scope>
    <source>
        <strain>MTCC 8252</strain>
    </source>
</reference>
<sequence>MKEELDAFHQIFTTTKEAIERFMAMLTPVIENAEDDHERLYYHHIYEEEEQRLSRLDVLIPLIEKFQDETDEGLFSPSNNAFNRLLQELNLEKFGLHNFIEHVDLALFSFTDEERQTLLKELRKDAYEGYQYVKEKLAEINARFDHDYADPHAHHDEHRDHLADMPSAGSSHEEVQPVAHKKKGFTVGSLIQ</sequence>
<keyword id="KW-0002">3D-structure</keyword>
<keyword id="KW-1284">Encapsulin nanocompartment</keyword>
<keyword id="KW-0408">Iron</keyword>
<keyword id="KW-0409">Iron storage</keyword>
<keyword id="KW-0560">Oxidoreductase</keyword>
<keyword id="KW-1185">Reference proteome</keyword>
<comment type="function">
    <text evidence="2 4">Cargo protein of a type 1 encapsulin nanocompartment. A ferritin-like iron-binding protein probably involved in iron mineralization in the encapsulin nanocompartment. Has ferroxidase activity even when encapsulated, the rate is probably controlled by the rate of Fe flux across the nanocompartment pores (PubMed:31282860). Part of the iron-mineralizing encapsulin-associated Firmicute (IMEF) system. 2 different cargo proteins have been identified (IMEF and Fer); when both are expressed in E.coli with the shell protein only IMEF is detected within the nanocompartment. E.coli expressing all 3 genes stores the largest amount of iron and is protected from Fe/H2O2-induced oxidative stress (PubMed:28263314).</text>
</comment>
<comment type="catalytic activity">
    <reaction evidence="4 8">
        <text>4 Fe(2+) + O2 + 4 H(+) = 4 Fe(3+) + 2 H2O</text>
        <dbReference type="Rhea" id="RHEA:11148"/>
        <dbReference type="ChEBI" id="CHEBI:15377"/>
        <dbReference type="ChEBI" id="CHEBI:15378"/>
        <dbReference type="ChEBI" id="CHEBI:15379"/>
        <dbReference type="ChEBI" id="CHEBI:29033"/>
        <dbReference type="ChEBI" id="CHEBI:29034"/>
        <dbReference type="EC" id="1.16.3.1"/>
    </reaction>
    <physiologicalReaction direction="left-to-right" evidence="4">
        <dbReference type="Rhea" id="RHEA:11149"/>
    </physiologicalReaction>
</comment>
<comment type="biophysicochemical properties">
    <temperatureDependence>
        <text evidence="4">The empty encapsulin nanocompartment is stable until 86.6 degrees Celsius, when loaded with cargo protein is stable until 88.9 degrees Celsius and when grown in high-iron conditions is stable until 91.8 degrees Celsius.</text>
    </temperatureDependence>
</comment>
<comment type="subunit">
    <text evidence="4 7">Homodimer, with 2 Fe atoms bound at the subunit interface (without encapsulin), probably also a dimer when encapsulated. 42 electron-dense accretions can be seen inside the nanocompartment which are probably this cargo protein, although perhaps up to one cargo dimer can be bound per shell protein.</text>
</comment>
<comment type="subcellular location">
    <subcellularLocation>
        <location evidence="3 4">Encapsulin nanocompartment</location>
    </subcellularLocation>
</comment>
<comment type="domain">
    <text evidence="7 9">The C-terminus (targeting peptide) is probably responsible for targeting to the encapsulin nanocompartment; it is separated from the rest of the protein by a flexible 37-residue linker.</text>
</comment>
<comment type="biotechnology">
    <text evidence="3">The encapsulin and cargo pair can be overexpressed in E.coli and in human HEK293T cells. In HEK293T in the presence of 0.5 M ferrous ammonium sulfate nanocompartments can be detected and used as cell markers. Can also be targeted to cell membranes by addition of a farnesylation signal to its C-terminus. Coexpression of this nanocompartment with a smaller nanocompartment from M.xanthus (AC Q1D6H4) allows of expression of different sized iron-rich particles. The encapsulin shell proteins are not seen to mix.</text>
</comment>
<evidence type="ECO:0000256" key="1">
    <source>
        <dbReference type="SAM" id="MobiDB-lite"/>
    </source>
</evidence>
<evidence type="ECO:0000269" key="2">
    <source>
    </source>
</evidence>
<evidence type="ECO:0000269" key="3">
    <source>
    </source>
</evidence>
<evidence type="ECO:0000269" key="4">
    <source>
    </source>
</evidence>
<evidence type="ECO:0000303" key="5">
    <source>
    </source>
</evidence>
<evidence type="ECO:0000303" key="6">
    <source>
    </source>
</evidence>
<evidence type="ECO:0000305" key="7">
    <source>
    </source>
</evidence>
<evidence type="ECO:0000305" key="8">
    <source>
    </source>
</evidence>
<evidence type="ECO:0000305" key="9">
    <source>
    </source>
</evidence>
<evidence type="ECO:0007744" key="10">
    <source>
        <dbReference type="PDB" id="6N63"/>
    </source>
</evidence>
<evidence type="ECO:0007829" key="11">
    <source>
        <dbReference type="PDB" id="6N63"/>
    </source>
</evidence>
<dbReference type="EC" id="1.16.3.1" evidence="4 8"/>
<dbReference type="EMBL" id="JWIR02000003">
    <property type="protein sequence ID" value="KKB43348.1"/>
    <property type="molecule type" value="Genomic_DNA"/>
</dbReference>
<dbReference type="RefSeq" id="WP_039238473.1">
    <property type="nucleotide sequence ID" value="NZ_JWIQ02000107.1"/>
</dbReference>
<dbReference type="PDB" id="6N63">
    <property type="method" value="X-ray"/>
    <property type="resolution" value="1.72 A"/>
    <property type="chains" value="A=1-192"/>
</dbReference>
<dbReference type="PDBsum" id="6N63"/>
<dbReference type="SMR" id="A0A0F5HNH9"/>
<dbReference type="STRING" id="1221996.QY95_01593"/>
<dbReference type="OrthoDB" id="2855273at2"/>
<dbReference type="Proteomes" id="UP000031563">
    <property type="component" value="Unassembled WGS sequence"/>
</dbReference>
<dbReference type="GO" id="GO:0140737">
    <property type="term" value="C:encapsulin nanocompartment"/>
    <property type="evidence" value="ECO:0000314"/>
    <property type="project" value="UniProtKB"/>
</dbReference>
<dbReference type="GO" id="GO:0004322">
    <property type="term" value="F:ferroxidase activity"/>
    <property type="evidence" value="ECO:0000314"/>
    <property type="project" value="UniProtKB"/>
</dbReference>
<dbReference type="GO" id="GO:0140315">
    <property type="term" value="F:iron ion sequestering activity"/>
    <property type="evidence" value="ECO:0007669"/>
    <property type="project" value="InterPro"/>
</dbReference>
<dbReference type="GO" id="GO:0006879">
    <property type="term" value="P:intracellular iron ion homeostasis"/>
    <property type="evidence" value="ECO:0007669"/>
    <property type="project" value="UniProtKB-KW"/>
</dbReference>
<dbReference type="InterPro" id="IPR030909">
    <property type="entry name" value="IMEF_cargo"/>
</dbReference>
<dbReference type="NCBIfam" id="TIGR04536">
    <property type="entry name" value="geobac_encap"/>
    <property type="match status" value="1"/>
</dbReference>
<dbReference type="Pfam" id="PF24309">
    <property type="entry name" value="IMEF_Flp"/>
    <property type="match status" value="1"/>
</dbReference>
<protein>
    <recommendedName>
        <fullName evidence="6">Ferritin-like protein</fullName>
        <ecNumber evidence="4 8">1.16.3.1</ecNumber>
    </recommendedName>
    <alternativeName>
        <fullName evidence="5">IMEF cargo protein</fullName>
    </alternativeName>
</protein>
<accession>A0A0F5HNH9</accession>
<accession>A0A0F5ID09</accession>
<proteinExistence type="evidence at protein level"/>
<feature type="chain" id="PRO_0000455333" description="Ferritin-like protein">
    <location>
        <begin position="1"/>
        <end position="192"/>
    </location>
</feature>
<feature type="region of interest" description="Linker" evidence="9">
    <location>
        <begin position="143"/>
        <end position="179"/>
    </location>
</feature>
<feature type="region of interest" description="Disordered" evidence="1">
    <location>
        <begin position="149"/>
        <end position="192"/>
    </location>
</feature>
<feature type="region of interest" description="Targeting peptide" evidence="4">
    <location>
        <begin position="180"/>
        <end position="192"/>
    </location>
</feature>
<feature type="compositionally biased region" description="Basic and acidic residues" evidence="1">
    <location>
        <begin position="149"/>
        <end position="163"/>
    </location>
</feature>
<feature type="binding site" evidence="4 10">
    <location>
        <position position="44"/>
    </location>
    <ligand>
        <name>Fe(3+)</name>
        <dbReference type="ChEBI" id="CHEBI:29034"/>
    </ligand>
</feature>
<feature type="binding site" evidence="4 10">
    <location>
        <position position="48"/>
    </location>
    <ligand>
        <name>Fe(3+)</name>
        <dbReference type="ChEBI" id="CHEBI:29034"/>
    </ligand>
</feature>
<feature type="binding site" evidence="4 10">
    <location>
        <position position="102"/>
    </location>
    <ligand>
        <name>Fe(3+)</name>
        <dbReference type="ChEBI" id="CHEBI:29034"/>
    </ligand>
</feature>
<feature type="mutagenesis site" description="No longer targeted to encapsulin nanocompartment." evidence="4">
    <location>
        <begin position="180"/>
        <end position="192"/>
    </location>
</feature>
<feature type="mutagenesis site" description="No longer targeted to encapsulin nanocompartment." evidence="2">
    <location>
        <begin position="183"/>
        <end position="192"/>
    </location>
</feature>
<feature type="helix" evidence="11">
    <location>
        <begin position="3"/>
        <end position="31"/>
    </location>
</feature>
<feature type="helix" evidence="11">
    <location>
        <begin position="36"/>
        <end position="69"/>
    </location>
</feature>
<feature type="turn" evidence="11">
    <location>
        <begin position="70"/>
        <end position="72"/>
    </location>
</feature>
<feature type="helix" evidence="11">
    <location>
        <begin position="79"/>
        <end position="109"/>
    </location>
</feature>
<feature type="helix" evidence="11">
    <location>
        <begin position="113"/>
        <end position="139"/>
    </location>
</feature>
<name>IMEF_BACTR</name>